<feature type="chain" id="PRO_0000419958" description="Phosphatidylinositol:ceramide inositolphosphotransferase">
    <location>
        <begin position="1"/>
        <end position="326"/>
    </location>
</feature>
<feature type="transmembrane region" description="Helical" evidence="2">
    <location>
        <begin position="33"/>
        <end position="53"/>
    </location>
</feature>
<feature type="transmembrane region" description="Helical" evidence="2">
    <location>
        <begin position="82"/>
        <end position="102"/>
    </location>
</feature>
<feature type="transmembrane region" description="Helical" evidence="2">
    <location>
        <begin position="115"/>
        <end position="135"/>
    </location>
</feature>
<feature type="transmembrane region" description="Helical" evidence="2">
    <location>
        <begin position="169"/>
        <end position="189"/>
    </location>
</feature>
<feature type="transmembrane region" description="Helical" evidence="2">
    <location>
        <begin position="199"/>
        <end position="219"/>
    </location>
</feature>
<feature type="transmembrane region" description="Helical" evidence="2">
    <location>
        <begin position="222"/>
        <end position="242"/>
    </location>
</feature>
<feature type="region of interest" description="Disordered" evidence="3">
    <location>
        <begin position="306"/>
        <end position="326"/>
    </location>
</feature>
<feature type="compositionally biased region" description="Polar residues" evidence="3">
    <location>
        <begin position="316"/>
        <end position="326"/>
    </location>
</feature>
<feature type="active site" evidence="1">
    <location>
        <position position="181"/>
    </location>
</feature>
<feature type="active site" evidence="1">
    <location>
        <position position="222"/>
    </location>
</feature>
<feature type="active site" evidence="1">
    <location>
        <position position="226"/>
    </location>
</feature>
<proteinExistence type="evidence at transcript level"/>
<sequence>MAVYIAREATKLWRKVCAEIAVELQLLFEKWRLLLAGLVFQYIHGLAARGVHYLHRPGPLLQDLGFMALPELGQDKGYVSESVFTFIFISFLLWSFHPFIYHSKRFYTVLLWRRVLAFLVASQFLRIITFYSTQLPGPNYHCREGSKMATLPPPHNVLEVLLINFPRGVLFGCGDLIFSSHMIFTLVFVRTYHKYGSKRLIKILAWLMAIIQSLLIIASRKHYSVDVVVAWYTVNLVVFFIDNKLPEMPDRTNGSSLLPVTAKDKDGRTKEELHKLEKDCKMKEEFHKLLNGNTVDSTDRRQRVQMNGKHGEDINHTLSDATPNGT</sequence>
<name>IPCS_ORYSJ</name>
<keyword id="KW-0333">Golgi apparatus</keyword>
<keyword id="KW-0444">Lipid biosynthesis</keyword>
<keyword id="KW-0443">Lipid metabolism</keyword>
<keyword id="KW-0472">Membrane</keyword>
<keyword id="KW-0611">Plant defense</keyword>
<keyword id="KW-1185">Reference proteome</keyword>
<keyword id="KW-0746">Sphingolipid metabolism</keyword>
<keyword id="KW-0808">Transferase</keyword>
<keyword id="KW-0812">Transmembrane</keyword>
<keyword id="KW-1133">Transmembrane helix</keyword>
<protein>
    <recommendedName>
        <fullName>Phosphatidylinositol:ceramide inositolphosphotransferase</fullName>
        <ecNumber>2.7.8.-</ecNumber>
    </recommendedName>
    <alternativeName>
        <fullName>Inositol-phosphorylceramide synthase</fullName>
        <shortName>IPC synthase</shortName>
    </alternativeName>
    <alternativeName>
        <fullName>Protein ENHANCING RPW8-MEDIATED HR-LIKE CELL DEATH 1</fullName>
    </alternativeName>
    <alternativeName>
        <fullName>Sphingolipid synthase</fullName>
    </alternativeName>
</protein>
<gene>
    <name type="primary">ERH1</name>
    <name type="ordered locus">Os01g0850100</name>
    <name type="ORF">OsJ_04087</name>
    <name type="ORF">P0414E03.14</name>
    <name type="ORF">P0529H11.3</name>
</gene>
<comment type="function">
    <text evidence="4">Catalyzes the transfer of the phosphorylinositol group from phosphatidylinositol (PI) to phytoceramide, an essential step in sphingolipid biosynthesis. May play an important role in modulating plant programmed cell death (PCD) associated with defense by promoting sphingolipid metabolism and regulating ceramide accumulation.</text>
</comment>
<comment type="subcellular location">
    <subcellularLocation>
        <location evidence="1">Golgi apparatus</location>
        <location evidence="1">trans-Golgi network membrane</location>
        <topology evidence="1">Multi-pass membrane protein</topology>
    </subcellularLocation>
</comment>
<comment type="disruption phenotype">
    <text evidence="4">Reduced plant stature. Spontaneous HR-like cell death (SHL).</text>
</comment>
<comment type="similarity">
    <text evidence="5">Belongs to the sphingomyelin synthase family.</text>
</comment>
<evidence type="ECO:0000250" key="1"/>
<evidence type="ECO:0000255" key="2"/>
<evidence type="ECO:0000256" key="3">
    <source>
        <dbReference type="SAM" id="MobiDB-lite"/>
    </source>
</evidence>
<evidence type="ECO:0000269" key="4">
    <source>
    </source>
</evidence>
<evidence type="ECO:0000305" key="5"/>
<accession>Q5N7A7</accession>
<accession>A0A0P0VAB0</accession>
<reference key="1">
    <citation type="journal article" date="2002" name="Nature">
        <title>The genome sequence and structure of rice chromosome 1.</title>
        <authorList>
            <person name="Sasaki T."/>
            <person name="Matsumoto T."/>
            <person name="Yamamoto K."/>
            <person name="Sakata K."/>
            <person name="Baba T."/>
            <person name="Katayose Y."/>
            <person name="Wu J."/>
            <person name="Niimura Y."/>
            <person name="Cheng Z."/>
            <person name="Nagamura Y."/>
            <person name="Antonio B.A."/>
            <person name="Kanamori H."/>
            <person name="Hosokawa S."/>
            <person name="Masukawa M."/>
            <person name="Arikawa K."/>
            <person name="Chiden Y."/>
            <person name="Hayashi M."/>
            <person name="Okamoto M."/>
            <person name="Ando T."/>
            <person name="Aoki H."/>
            <person name="Arita K."/>
            <person name="Hamada M."/>
            <person name="Harada C."/>
            <person name="Hijishita S."/>
            <person name="Honda M."/>
            <person name="Ichikawa Y."/>
            <person name="Idonuma A."/>
            <person name="Iijima M."/>
            <person name="Ikeda M."/>
            <person name="Ikeno M."/>
            <person name="Ito S."/>
            <person name="Ito T."/>
            <person name="Ito Y."/>
            <person name="Ito Y."/>
            <person name="Iwabuchi A."/>
            <person name="Kamiya K."/>
            <person name="Karasawa W."/>
            <person name="Katagiri S."/>
            <person name="Kikuta A."/>
            <person name="Kobayashi N."/>
            <person name="Kono I."/>
            <person name="Machita K."/>
            <person name="Maehara T."/>
            <person name="Mizuno H."/>
            <person name="Mizubayashi T."/>
            <person name="Mukai Y."/>
            <person name="Nagasaki H."/>
            <person name="Nakashima M."/>
            <person name="Nakama Y."/>
            <person name="Nakamichi Y."/>
            <person name="Nakamura M."/>
            <person name="Namiki N."/>
            <person name="Negishi M."/>
            <person name="Ohta I."/>
            <person name="Ono N."/>
            <person name="Saji S."/>
            <person name="Sakai K."/>
            <person name="Shibata M."/>
            <person name="Shimokawa T."/>
            <person name="Shomura A."/>
            <person name="Song J."/>
            <person name="Takazaki Y."/>
            <person name="Terasawa K."/>
            <person name="Tsuji K."/>
            <person name="Waki K."/>
            <person name="Yamagata H."/>
            <person name="Yamane H."/>
            <person name="Yoshiki S."/>
            <person name="Yoshihara R."/>
            <person name="Yukawa K."/>
            <person name="Zhong H."/>
            <person name="Iwama H."/>
            <person name="Endo T."/>
            <person name="Ito H."/>
            <person name="Hahn J.H."/>
            <person name="Kim H.-I."/>
            <person name="Eun M.-Y."/>
            <person name="Yano M."/>
            <person name="Jiang J."/>
            <person name="Gojobori T."/>
        </authorList>
    </citation>
    <scope>NUCLEOTIDE SEQUENCE [LARGE SCALE GENOMIC DNA]</scope>
    <source>
        <strain>cv. Nipponbare</strain>
    </source>
</reference>
<reference key="2">
    <citation type="journal article" date="2005" name="Nature">
        <title>The map-based sequence of the rice genome.</title>
        <authorList>
            <consortium name="International rice genome sequencing project (IRGSP)"/>
        </authorList>
    </citation>
    <scope>NUCLEOTIDE SEQUENCE [LARGE SCALE GENOMIC DNA]</scope>
    <source>
        <strain>cv. Nipponbare</strain>
    </source>
</reference>
<reference key="3">
    <citation type="journal article" date="2008" name="Nucleic Acids Res.">
        <title>The rice annotation project database (RAP-DB): 2008 update.</title>
        <authorList>
            <consortium name="The rice annotation project (RAP)"/>
        </authorList>
    </citation>
    <scope>GENOME REANNOTATION</scope>
    <source>
        <strain>cv. Nipponbare</strain>
    </source>
</reference>
<reference key="4">
    <citation type="journal article" date="2013" name="Rice">
        <title>Improvement of the Oryza sativa Nipponbare reference genome using next generation sequence and optical map data.</title>
        <authorList>
            <person name="Kawahara Y."/>
            <person name="de la Bastide M."/>
            <person name="Hamilton J.P."/>
            <person name="Kanamori H."/>
            <person name="McCombie W.R."/>
            <person name="Ouyang S."/>
            <person name="Schwartz D.C."/>
            <person name="Tanaka T."/>
            <person name="Wu J."/>
            <person name="Zhou S."/>
            <person name="Childs K.L."/>
            <person name="Davidson R.M."/>
            <person name="Lin H."/>
            <person name="Quesada-Ocampo L."/>
            <person name="Vaillancourt B."/>
            <person name="Sakai H."/>
            <person name="Lee S.S."/>
            <person name="Kim J."/>
            <person name="Numa H."/>
            <person name="Itoh T."/>
            <person name="Buell C.R."/>
            <person name="Matsumoto T."/>
        </authorList>
    </citation>
    <scope>GENOME REANNOTATION</scope>
    <source>
        <strain>cv. Nipponbare</strain>
    </source>
</reference>
<reference key="5">
    <citation type="journal article" date="2005" name="PLoS Biol.">
        <title>The genomes of Oryza sativa: a history of duplications.</title>
        <authorList>
            <person name="Yu J."/>
            <person name="Wang J."/>
            <person name="Lin W."/>
            <person name="Li S."/>
            <person name="Li H."/>
            <person name="Zhou J."/>
            <person name="Ni P."/>
            <person name="Dong W."/>
            <person name="Hu S."/>
            <person name="Zeng C."/>
            <person name="Zhang J."/>
            <person name="Zhang Y."/>
            <person name="Li R."/>
            <person name="Xu Z."/>
            <person name="Li S."/>
            <person name="Li X."/>
            <person name="Zheng H."/>
            <person name="Cong L."/>
            <person name="Lin L."/>
            <person name="Yin J."/>
            <person name="Geng J."/>
            <person name="Li G."/>
            <person name="Shi J."/>
            <person name="Liu J."/>
            <person name="Lv H."/>
            <person name="Li J."/>
            <person name="Wang J."/>
            <person name="Deng Y."/>
            <person name="Ran L."/>
            <person name="Shi X."/>
            <person name="Wang X."/>
            <person name="Wu Q."/>
            <person name="Li C."/>
            <person name="Ren X."/>
            <person name="Wang J."/>
            <person name="Wang X."/>
            <person name="Li D."/>
            <person name="Liu D."/>
            <person name="Zhang X."/>
            <person name="Ji Z."/>
            <person name="Zhao W."/>
            <person name="Sun Y."/>
            <person name="Zhang Z."/>
            <person name="Bao J."/>
            <person name="Han Y."/>
            <person name="Dong L."/>
            <person name="Ji J."/>
            <person name="Chen P."/>
            <person name="Wu S."/>
            <person name="Liu J."/>
            <person name="Xiao Y."/>
            <person name="Bu D."/>
            <person name="Tan J."/>
            <person name="Yang L."/>
            <person name="Ye C."/>
            <person name="Zhang J."/>
            <person name="Xu J."/>
            <person name="Zhou Y."/>
            <person name="Yu Y."/>
            <person name="Zhang B."/>
            <person name="Zhuang S."/>
            <person name="Wei H."/>
            <person name="Liu B."/>
            <person name="Lei M."/>
            <person name="Yu H."/>
            <person name="Li Y."/>
            <person name="Xu H."/>
            <person name="Wei S."/>
            <person name="He X."/>
            <person name="Fang L."/>
            <person name="Zhang Z."/>
            <person name="Zhang Y."/>
            <person name="Huang X."/>
            <person name="Su Z."/>
            <person name="Tong W."/>
            <person name="Li J."/>
            <person name="Tong Z."/>
            <person name="Li S."/>
            <person name="Ye J."/>
            <person name="Wang L."/>
            <person name="Fang L."/>
            <person name="Lei T."/>
            <person name="Chen C.-S."/>
            <person name="Chen H.-C."/>
            <person name="Xu Z."/>
            <person name="Li H."/>
            <person name="Huang H."/>
            <person name="Zhang F."/>
            <person name="Xu H."/>
            <person name="Li N."/>
            <person name="Zhao C."/>
            <person name="Li S."/>
            <person name="Dong L."/>
            <person name="Huang Y."/>
            <person name="Li L."/>
            <person name="Xi Y."/>
            <person name="Qi Q."/>
            <person name="Li W."/>
            <person name="Zhang B."/>
            <person name="Hu W."/>
            <person name="Zhang Y."/>
            <person name="Tian X."/>
            <person name="Jiao Y."/>
            <person name="Liang X."/>
            <person name="Jin J."/>
            <person name="Gao L."/>
            <person name="Zheng W."/>
            <person name="Hao B."/>
            <person name="Liu S.-M."/>
            <person name="Wang W."/>
            <person name="Yuan L."/>
            <person name="Cao M."/>
            <person name="McDermott J."/>
            <person name="Samudrala R."/>
            <person name="Wang J."/>
            <person name="Wong G.K.-S."/>
            <person name="Yang H."/>
        </authorList>
    </citation>
    <scope>NUCLEOTIDE SEQUENCE [LARGE SCALE GENOMIC DNA]</scope>
    <source>
        <strain>cv. Nipponbare</strain>
    </source>
</reference>
<reference key="6">
    <citation type="journal article" date="2003" name="Science">
        <title>Collection, mapping, and annotation of over 28,000 cDNA clones from japonica rice.</title>
        <authorList>
            <consortium name="The rice full-length cDNA consortium"/>
        </authorList>
    </citation>
    <scope>NUCLEOTIDE SEQUENCE [LARGE SCALE MRNA]</scope>
    <source>
        <strain>cv. Nipponbare</strain>
    </source>
</reference>
<reference key="7">
    <citation type="journal article" date="2008" name="Plant Cell">
        <title>An inositolphosphorylceramide synthase is involved in regulation of plant programmed cell death associated with defense in Arabidopsis.</title>
        <authorList>
            <person name="Wang W."/>
            <person name="Yang X."/>
            <person name="Tangchaiburana S."/>
            <person name="Ndeh R."/>
            <person name="Markham J.E."/>
            <person name="Tsegaye Y."/>
            <person name="Dunn T.M."/>
            <person name="Wang G.-L."/>
            <person name="Bellizzi M."/>
            <person name="Parsons J.F."/>
            <person name="Morrissey D."/>
            <person name="Bravo J.E."/>
            <person name="Lynch D.V."/>
            <person name="Xiao S."/>
        </authorList>
    </citation>
    <scope>FUNCTION</scope>
    <scope>DISRUPTION PHENOTYPE</scope>
</reference>
<organism>
    <name type="scientific">Oryza sativa subsp. japonica</name>
    <name type="common">Rice</name>
    <dbReference type="NCBI Taxonomy" id="39947"/>
    <lineage>
        <taxon>Eukaryota</taxon>
        <taxon>Viridiplantae</taxon>
        <taxon>Streptophyta</taxon>
        <taxon>Embryophyta</taxon>
        <taxon>Tracheophyta</taxon>
        <taxon>Spermatophyta</taxon>
        <taxon>Magnoliopsida</taxon>
        <taxon>Liliopsida</taxon>
        <taxon>Poales</taxon>
        <taxon>Poaceae</taxon>
        <taxon>BOP clade</taxon>
        <taxon>Oryzoideae</taxon>
        <taxon>Oryzeae</taxon>
        <taxon>Oryzinae</taxon>
        <taxon>Oryza</taxon>
        <taxon>Oryza sativa</taxon>
    </lineage>
</organism>
<dbReference type="EC" id="2.7.8.-"/>
<dbReference type="EMBL" id="AP003242">
    <property type="protein sequence ID" value="BAD81774.1"/>
    <property type="molecule type" value="Genomic_DNA"/>
</dbReference>
<dbReference type="EMBL" id="AP004072">
    <property type="protein sequence ID" value="BAD82642.1"/>
    <property type="molecule type" value="Genomic_DNA"/>
</dbReference>
<dbReference type="EMBL" id="AP008207">
    <property type="protein sequence ID" value="BAF06726.1"/>
    <property type="molecule type" value="Genomic_DNA"/>
</dbReference>
<dbReference type="EMBL" id="AP014957">
    <property type="protein sequence ID" value="BAS75239.1"/>
    <property type="molecule type" value="Genomic_DNA"/>
</dbReference>
<dbReference type="EMBL" id="CM000138">
    <property type="protein sequence ID" value="EEE55674.1"/>
    <property type="molecule type" value="Genomic_DNA"/>
</dbReference>
<dbReference type="EMBL" id="AK071523">
    <property type="protein sequence ID" value="BAG92539.1"/>
    <property type="molecule type" value="mRNA"/>
</dbReference>
<dbReference type="RefSeq" id="XP_015622359.1">
    <property type="nucleotide sequence ID" value="XM_015766873.1"/>
</dbReference>
<dbReference type="FunCoup" id="Q5N7A7">
    <property type="interactions" value="138"/>
</dbReference>
<dbReference type="STRING" id="39947.Q5N7A7"/>
<dbReference type="PaxDb" id="39947-Q5N7A7"/>
<dbReference type="EnsemblPlants" id="Os01t0850100-01">
    <property type="protein sequence ID" value="Os01t0850100-01"/>
    <property type="gene ID" value="Os01g0850100"/>
</dbReference>
<dbReference type="Gramene" id="Os01t0850100-01">
    <property type="protein sequence ID" value="Os01t0850100-01"/>
    <property type="gene ID" value="Os01g0850100"/>
</dbReference>
<dbReference type="KEGG" id="dosa:Os01g0850100"/>
<dbReference type="eggNOG" id="KOG3058">
    <property type="taxonomic scope" value="Eukaryota"/>
</dbReference>
<dbReference type="HOGENOM" id="CLU_078641_1_0_1"/>
<dbReference type="InParanoid" id="Q5N7A7"/>
<dbReference type="OMA" id="ADNAMNG"/>
<dbReference type="OrthoDB" id="422827at2759"/>
<dbReference type="Proteomes" id="UP000000763">
    <property type="component" value="Chromosome 1"/>
</dbReference>
<dbReference type="Proteomes" id="UP000007752">
    <property type="component" value="Chromosome 1"/>
</dbReference>
<dbReference type="Proteomes" id="UP000059680">
    <property type="component" value="Chromosome 1"/>
</dbReference>
<dbReference type="GO" id="GO:0005789">
    <property type="term" value="C:endoplasmic reticulum membrane"/>
    <property type="evidence" value="ECO:0000318"/>
    <property type="project" value="GO_Central"/>
</dbReference>
<dbReference type="GO" id="GO:0000139">
    <property type="term" value="C:Golgi membrane"/>
    <property type="evidence" value="ECO:0000318"/>
    <property type="project" value="GO_Central"/>
</dbReference>
<dbReference type="GO" id="GO:0005886">
    <property type="term" value="C:plasma membrane"/>
    <property type="evidence" value="ECO:0000318"/>
    <property type="project" value="GO_Central"/>
</dbReference>
<dbReference type="GO" id="GO:0005802">
    <property type="term" value="C:trans-Golgi network"/>
    <property type="evidence" value="ECO:0000318"/>
    <property type="project" value="GO_Central"/>
</dbReference>
<dbReference type="GO" id="GO:0047493">
    <property type="term" value="F:ceramide cholinephosphotransferase activity"/>
    <property type="evidence" value="ECO:0000318"/>
    <property type="project" value="GO_Central"/>
</dbReference>
<dbReference type="GO" id="GO:0045140">
    <property type="term" value="F:inositol phosphoceramide synthase activity"/>
    <property type="evidence" value="ECO:0000318"/>
    <property type="project" value="GO_Central"/>
</dbReference>
<dbReference type="GO" id="GO:0033188">
    <property type="term" value="F:sphingomyelin synthase activity"/>
    <property type="evidence" value="ECO:0000318"/>
    <property type="project" value="GO_Central"/>
</dbReference>
<dbReference type="GO" id="GO:0046513">
    <property type="term" value="P:ceramide biosynthetic process"/>
    <property type="evidence" value="ECO:0000318"/>
    <property type="project" value="GO_Central"/>
</dbReference>
<dbReference type="GO" id="GO:0006952">
    <property type="term" value="P:defense response"/>
    <property type="evidence" value="ECO:0007669"/>
    <property type="project" value="UniProtKB-KW"/>
</dbReference>
<dbReference type="InterPro" id="IPR045221">
    <property type="entry name" value="Sphingomyelin_synth-like"/>
</dbReference>
<dbReference type="InterPro" id="IPR025749">
    <property type="entry name" value="Sphingomyelin_synth-like_dom"/>
</dbReference>
<dbReference type="PANTHER" id="PTHR21290:SF64">
    <property type="entry name" value="PHOSPHATIDYLINOSITOL:CERAMIDE INOSITOLPHOSPHOTRANSFERASE"/>
    <property type="match status" value="1"/>
</dbReference>
<dbReference type="PANTHER" id="PTHR21290">
    <property type="entry name" value="SPHINGOMYELIN SYNTHETASE"/>
    <property type="match status" value="1"/>
</dbReference>
<dbReference type="Pfam" id="PF14360">
    <property type="entry name" value="PAP2_C"/>
    <property type="match status" value="1"/>
</dbReference>